<organism>
    <name type="scientific">Picosynechococcus sp. (strain ATCC 27264 / PCC 7002 / PR-6)</name>
    <name type="common">Agmenellum quadruplicatum</name>
    <dbReference type="NCBI Taxonomy" id="32049"/>
    <lineage>
        <taxon>Bacteria</taxon>
        <taxon>Bacillati</taxon>
        <taxon>Cyanobacteriota</taxon>
        <taxon>Cyanophyceae</taxon>
        <taxon>Oscillatoriophycideae</taxon>
        <taxon>Chroococcales</taxon>
        <taxon>Geminocystaceae</taxon>
        <taxon>Picosynechococcus</taxon>
    </lineage>
</organism>
<evidence type="ECO:0000255" key="1">
    <source>
        <dbReference type="HAMAP-Rule" id="MF_00856"/>
    </source>
</evidence>
<evidence type="ECO:0000269" key="2">
    <source>
    </source>
</evidence>
<evidence type="ECO:0000303" key="3">
    <source>
    </source>
</evidence>
<evidence type="ECO:0000305" key="4">
    <source>
    </source>
</evidence>
<protein>
    <recommendedName>
        <fullName evidence="1 3">RuBisCO accumulation factor 1</fullName>
    </recommendedName>
</protein>
<comment type="function">
    <text evidence="1 2">A major RuBisCO chaperone. Acts after GroEL-GroES chaperonin to fold and/or assemble the large subunit of RuBisCO (ccbL, rbcL). Cooperates with RbcX in RbcL folding, plays the major role in assembly of dimers into RbcL(8)-Raf1(8) intermediate complexes. RbcS replaces Raf1, leading to holoenzyme formation.</text>
</comment>
<comment type="function">
    <text evidence="2">Raf1 and RbcX are probably functionally redundant; it has been suggested they may cooperate.</text>
</comment>
<comment type="subunit">
    <text evidence="1 4">Homodimer. Forms an RbcL(8)-Raf1(8) complex. Forms complexes of many stoichiometries with RbcL with and without RbcS. RbcX and Raf1 can bind simultaneously to RbcL.</text>
</comment>
<comment type="subcellular location">
    <subcellularLocation>
        <location evidence="1">Cytoplasm</location>
    </subcellularLocation>
</comment>
<comment type="domain">
    <text evidence="1">Has 3 domains, the N-terminal alpha-helical domain, an extended flexible linker and the C-terminal beta-sheet domain. The 2 C-terminal beta-sheet domains are swapped and pack against each other to form the dimer interface.</text>
</comment>
<comment type="similarity">
    <text evidence="1">Belongs to the RAF family.</text>
</comment>
<feature type="chain" id="PRO_0000451578" description="RuBisCO accumulation factor 1">
    <location>
        <begin position="1"/>
        <end position="359"/>
    </location>
</feature>
<feature type="region of interest" description="N-terminal alpha-helix" evidence="1 4">
    <location>
        <begin position="12"/>
        <end position="195"/>
    </location>
</feature>
<feature type="region of interest" description="C-terminal beta-sheet" evidence="1 4">
    <location>
        <begin position="219"/>
        <end position="345"/>
    </location>
</feature>
<proteinExistence type="evidence at protein level"/>
<sequence length="359" mass="39911">MIGQPQSPEYKLSPEETDALFRSLLHKEGTWVEWGVGCQQLQQSGHSAQEIFEQTGFQTAQQNMIIVAAQVYQSIASSGVPEDLLAYCRGPRSDVLYELRILSHSQRAIAAQVCQAKSLEFDGAKELARAMQEFARLPQIPDSFTEHPGDAVAYQAWRSAKQKKDLQDRTRLIAKGLKFAHSATARQKIEQLLSDLTTSPTKAAPLLPLYRYDEDTNVPLLIPVAGSLPLESDRLLSVPPLKQASPFNLVTVATATSLVPLPSWQNVLTAGDPVVIFHQTDQLPQPIPGKPEPVLILLDRQQTTWNDNSYFAVDADGKVELGWFAEAPIAKILGQVLLVMRPKKILDENNLREPWQMDD</sequence>
<keyword id="KW-0120">Carbon dioxide fixation</keyword>
<keyword id="KW-0143">Chaperone</keyword>
<keyword id="KW-0963">Cytoplasm</keyword>
<keyword id="KW-0602">Photosynthesis</keyword>
<keyword id="KW-1185">Reference proteome</keyword>
<accession>B1XK11</accession>
<dbReference type="EMBL" id="CP000951">
    <property type="protein sequence ID" value="ACB00366.1"/>
    <property type="molecule type" value="Genomic_DNA"/>
</dbReference>
<dbReference type="RefSeq" id="WP_012307984.1">
    <property type="nucleotide sequence ID" value="NZ_JAHHPU010000003.1"/>
</dbReference>
<dbReference type="SMR" id="B1XK11"/>
<dbReference type="STRING" id="32049.SYNPCC7002_A2388"/>
<dbReference type="KEGG" id="syp:SYNPCC7002_A2388"/>
<dbReference type="eggNOG" id="ENOG502Z7IG">
    <property type="taxonomic scope" value="Bacteria"/>
</dbReference>
<dbReference type="HOGENOM" id="CLU_766477_0_0_3"/>
<dbReference type="Proteomes" id="UP000001688">
    <property type="component" value="Chromosome"/>
</dbReference>
<dbReference type="GO" id="GO:0005737">
    <property type="term" value="C:cytoplasm"/>
    <property type="evidence" value="ECO:0007669"/>
    <property type="project" value="UniProtKB-SubCell"/>
</dbReference>
<dbReference type="GO" id="GO:0015977">
    <property type="term" value="P:carbon fixation"/>
    <property type="evidence" value="ECO:0007669"/>
    <property type="project" value="UniProtKB-UniRule"/>
</dbReference>
<dbReference type="GO" id="GO:0015979">
    <property type="term" value="P:photosynthesis"/>
    <property type="evidence" value="ECO:0007669"/>
    <property type="project" value="UniProtKB-KW"/>
</dbReference>
<dbReference type="GO" id="GO:0110102">
    <property type="term" value="P:ribulose bisphosphate carboxylase complex assembly"/>
    <property type="evidence" value="ECO:0000314"/>
    <property type="project" value="UniProtKB"/>
</dbReference>
<dbReference type="HAMAP" id="MF_00856">
    <property type="entry name" value="Raf1"/>
    <property type="match status" value="1"/>
</dbReference>
<dbReference type="InterPro" id="IPR037494">
    <property type="entry name" value="RAF1"/>
</dbReference>
<dbReference type="InterPro" id="IPR040858">
    <property type="entry name" value="Raf1_C"/>
</dbReference>
<dbReference type="InterPro" id="IPR046382">
    <property type="entry name" value="Raf1_cyn"/>
</dbReference>
<dbReference type="InterPro" id="IPR040781">
    <property type="entry name" value="Raf1_HTH"/>
</dbReference>
<dbReference type="InterPro" id="IPR041358">
    <property type="entry name" value="Raf1_N"/>
</dbReference>
<dbReference type="PANTHER" id="PTHR35299">
    <property type="entry name" value="RUBISCO ACCUMULATION FACTOR 1"/>
    <property type="match status" value="1"/>
</dbReference>
<dbReference type="PANTHER" id="PTHR35299:SF6">
    <property type="entry name" value="RUBISCO ACCUMULATION FACTOR 1"/>
    <property type="match status" value="1"/>
</dbReference>
<dbReference type="Pfam" id="PF18579">
    <property type="entry name" value="Raf1_HTH"/>
    <property type="match status" value="1"/>
</dbReference>
<dbReference type="Pfam" id="PF18578">
    <property type="entry name" value="Raf1_N"/>
    <property type="match status" value="1"/>
</dbReference>
<dbReference type="Pfam" id="PF18087">
    <property type="entry name" value="RuBisCo_chap_C"/>
    <property type="match status" value="1"/>
</dbReference>
<gene>
    <name evidence="1 3" type="primary">raf1</name>
    <name type="ordered locus">SYNPCC7002_A2388</name>
</gene>
<name>RAF1_PICP2</name>
<reference key="1">
    <citation type="submission" date="2008-02" db="EMBL/GenBank/DDBJ databases">
        <title>Complete sequence of Synechococcus sp. PCC 7002.</title>
        <authorList>
            <person name="Li T."/>
            <person name="Zhao J."/>
            <person name="Zhao C."/>
            <person name="Liu Z."/>
            <person name="Zhao F."/>
            <person name="Marquardt J."/>
            <person name="Nomura C.T."/>
            <person name="Persson S."/>
            <person name="Detter J.C."/>
            <person name="Richardson P.M."/>
            <person name="Lanz C."/>
            <person name="Schuster S.C."/>
            <person name="Wang J."/>
            <person name="Li S."/>
            <person name="Huang X."/>
            <person name="Cai T."/>
            <person name="Yu Z."/>
            <person name="Luo J."/>
            <person name="Zhao J."/>
            <person name="Bryant D.A."/>
        </authorList>
    </citation>
    <scope>NUCLEOTIDE SEQUENCE [LARGE SCALE GENOMIC DNA]</scope>
    <source>
        <strain>ATCC 27264 / PCC 7002 / PR-6</strain>
    </source>
</reference>
<reference key="2">
    <citation type="journal article" date="2015" name="Nat. Struct. Mol. Biol.">
        <title>Structure and mechanism of the Rubisco-assembly chaperone Raf1.</title>
        <authorList>
            <person name="Hauser T."/>
            <person name="Bhat J.Y."/>
            <person name="Milicic G."/>
            <person name="Wendler P."/>
            <person name="Hartl F.U."/>
            <person name="Bracher A."/>
            <person name="Hayer-Hartl M."/>
        </authorList>
    </citation>
    <scope>SUBUNIT</scope>
    <scope>INTERACTION WITH RBCL</scope>
    <scope>DOMAIN</scope>
    <source>
        <strain>ATCC 27264 / PCC 7002 / PR-6</strain>
    </source>
</reference>